<reference key="1">
    <citation type="submission" date="2008-02" db="EMBL/GenBank/DDBJ databases">
        <title>Complete sequence of chromosome of Methylobacterium sp. 4-46.</title>
        <authorList>
            <consortium name="US DOE Joint Genome Institute"/>
            <person name="Copeland A."/>
            <person name="Lucas S."/>
            <person name="Lapidus A."/>
            <person name="Glavina del Rio T."/>
            <person name="Dalin E."/>
            <person name="Tice H."/>
            <person name="Bruce D."/>
            <person name="Goodwin L."/>
            <person name="Pitluck S."/>
            <person name="Chertkov O."/>
            <person name="Brettin T."/>
            <person name="Detter J.C."/>
            <person name="Han C."/>
            <person name="Kuske C.R."/>
            <person name="Schmutz J."/>
            <person name="Larimer F."/>
            <person name="Land M."/>
            <person name="Hauser L."/>
            <person name="Kyrpides N."/>
            <person name="Ivanova N."/>
            <person name="Marx C.J."/>
            <person name="Richardson P."/>
        </authorList>
    </citation>
    <scope>NUCLEOTIDE SEQUENCE [LARGE SCALE GENOMIC DNA]</scope>
    <source>
        <strain>4-46</strain>
    </source>
</reference>
<protein>
    <recommendedName>
        <fullName evidence="2">Alkyl hydroperoxide reductase AhpD</fullName>
        <ecNumber evidence="2">1.11.1.28</ecNumber>
    </recommendedName>
    <alternativeName>
        <fullName evidence="2">Alkylhydroperoxidase AhpD</fullName>
    </alternativeName>
</protein>
<keyword id="KW-0049">Antioxidant</keyword>
<keyword id="KW-1015">Disulfide bond</keyword>
<keyword id="KW-0560">Oxidoreductase</keyword>
<keyword id="KW-0575">Peroxidase</keyword>
<keyword id="KW-0676">Redox-active center</keyword>
<feature type="chain" id="PRO_0000359494" description="Alkyl hydroperoxide reductase AhpD">
    <location>
        <begin position="1"/>
        <end position="176"/>
    </location>
</feature>
<feature type="active site" description="Proton donor" evidence="2">
    <location>
        <position position="131"/>
    </location>
</feature>
<feature type="active site" description="Cysteine sulfenic acid (-SOH) intermediate" evidence="2">
    <location>
        <position position="134"/>
    </location>
</feature>
<feature type="disulfide bond" evidence="1">
    <location>
        <begin position="131"/>
        <end position="134"/>
    </location>
</feature>
<feature type="disulfide bond" description="Interchain (with AhpC); in linked form" evidence="2">
    <location>
        <position position="134"/>
    </location>
</feature>
<name>AHPD_METS4</name>
<organism>
    <name type="scientific">Methylobacterium sp. (strain 4-46)</name>
    <dbReference type="NCBI Taxonomy" id="426117"/>
    <lineage>
        <taxon>Bacteria</taxon>
        <taxon>Pseudomonadati</taxon>
        <taxon>Pseudomonadota</taxon>
        <taxon>Alphaproteobacteria</taxon>
        <taxon>Hyphomicrobiales</taxon>
        <taxon>Methylobacteriaceae</taxon>
        <taxon>Methylobacterium</taxon>
    </lineage>
</organism>
<evidence type="ECO:0000250" key="1"/>
<evidence type="ECO:0000255" key="2">
    <source>
        <dbReference type="HAMAP-Rule" id="MF_01676"/>
    </source>
</evidence>
<gene>
    <name evidence="2" type="primary">ahpD</name>
    <name type="ordered locus">M446_3530</name>
</gene>
<proteinExistence type="inferred from homology"/>
<comment type="function">
    <text evidence="2">Antioxidant protein with alkyl hydroperoxidase activity. Required for the reduction of the AhpC active site cysteine residues and for the regeneration of the AhpC enzyme activity.</text>
</comment>
<comment type="catalytic activity">
    <reaction evidence="2">
        <text>N(6)-[(R)-dihydrolipoyl]-L-lysyl-[lipoyl-carrier protein] + a hydroperoxide = N(6)-[(R)-lipoyl]-L-lysyl-[lipoyl-carrier protein] + an alcohol + H2O</text>
        <dbReference type="Rhea" id="RHEA:62636"/>
        <dbReference type="Rhea" id="RHEA-COMP:10502"/>
        <dbReference type="Rhea" id="RHEA-COMP:16355"/>
        <dbReference type="ChEBI" id="CHEBI:15377"/>
        <dbReference type="ChEBI" id="CHEBI:30879"/>
        <dbReference type="ChEBI" id="CHEBI:35924"/>
        <dbReference type="ChEBI" id="CHEBI:83099"/>
        <dbReference type="ChEBI" id="CHEBI:83100"/>
        <dbReference type="EC" id="1.11.1.28"/>
    </reaction>
</comment>
<comment type="similarity">
    <text evidence="2">Belongs to the AhpD family.</text>
</comment>
<sequence length="176" mass="18401">MTLDALLQSLPPYAKDVRLNFSSLGREETLTAQQRDGLLVACGLASRNPDLARALEAEAAPRLSPAALAAAKAAATVMAMNNVYYRFTHLASNPAYATRPAKLRMSSIGNPGVARADFELWSLAVSAINGCGRCIDAHEQVLREAGVGEEAIQAAVRVAAVVASLAVALESVRAAA</sequence>
<accession>B0UAJ8</accession>
<dbReference type="EC" id="1.11.1.28" evidence="2"/>
<dbReference type="EMBL" id="CP000943">
    <property type="protein sequence ID" value="ACA17913.1"/>
    <property type="molecule type" value="Genomic_DNA"/>
</dbReference>
<dbReference type="RefSeq" id="WP_012333312.1">
    <property type="nucleotide sequence ID" value="NC_010511.1"/>
</dbReference>
<dbReference type="SMR" id="B0UAJ8"/>
<dbReference type="STRING" id="426117.M446_3530"/>
<dbReference type="KEGG" id="met:M446_3530"/>
<dbReference type="eggNOG" id="COG2128">
    <property type="taxonomic scope" value="Bacteria"/>
</dbReference>
<dbReference type="HOGENOM" id="CLU_105328_0_0_5"/>
<dbReference type="GO" id="GO:0008785">
    <property type="term" value="F:alkyl hydroperoxide reductase activity"/>
    <property type="evidence" value="ECO:0007669"/>
    <property type="project" value="UniProtKB-UniRule"/>
</dbReference>
<dbReference type="GO" id="GO:0015036">
    <property type="term" value="F:disulfide oxidoreductase activity"/>
    <property type="evidence" value="ECO:0007669"/>
    <property type="project" value="TreeGrafter"/>
</dbReference>
<dbReference type="GO" id="GO:0032843">
    <property type="term" value="F:hydroperoxide reductase activity"/>
    <property type="evidence" value="ECO:0007669"/>
    <property type="project" value="InterPro"/>
</dbReference>
<dbReference type="GO" id="GO:0051920">
    <property type="term" value="F:peroxiredoxin activity"/>
    <property type="evidence" value="ECO:0007669"/>
    <property type="project" value="InterPro"/>
</dbReference>
<dbReference type="GO" id="GO:0045454">
    <property type="term" value="P:cell redox homeostasis"/>
    <property type="evidence" value="ECO:0007669"/>
    <property type="project" value="TreeGrafter"/>
</dbReference>
<dbReference type="GO" id="GO:0006979">
    <property type="term" value="P:response to oxidative stress"/>
    <property type="evidence" value="ECO:0007669"/>
    <property type="project" value="InterPro"/>
</dbReference>
<dbReference type="Gene3D" id="1.20.1290.10">
    <property type="entry name" value="AhpD-like"/>
    <property type="match status" value="1"/>
</dbReference>
<dbReference type="HAMAP" id="MF_01676">
    <property type="entry name" value="AhpD"/>
    <property type="match status" value="1"/>
</dbReference>
<dbReference type="InterPro" id="IPR004674">
    <property type="entry name" value="AhpD"/>
</dbReference>
<dbReference type="InterPro" id="IPR029032">
    <property type="entry name" value="AhpD-like"/>
</dbReference>
<dbReference type="InterPro" id="IPR004675">
    <property type="entry name" value="AhpD_core"/>
</dbReference>
<dbReference type="InterPro" id="IPR003779">
    <property type="entry name" value="CMD-like"/>
</dbReference>
<dbReference type="NCBIfam" id="TIGR00777">
    <property type="entry name" value="ahpD"/>
    <property type="match status" value="1"/>
</dbReference>
<dbReference type="NCBIfam" id="TIGR00778">
    <property type="entry name" value="ahpD_dom"/>
    <property type="match status" value="1"/>
</dbReference>
<dbReference type="PANTHER" id="PTHR33930">
    <property type="entry name" value="ALKYL HYDROPEROXIDE REDUCTASE AHPD"/>
    <property type="match status" value="1"/>
</dbReference>
<dbReference type="PANTHER" id="PTHR33930:SF7">
    <property type="entry name" value="ALKYL HYDROPEROXIDE REDUCTASE AHPD"/>
    <property type="match status" value="1"/>
</dbReference>
<dbReference type="Pfam" id="PF02627">
    <property type="entry name" value="CMD"/>
    <property type="match status" value="1"/>
</dbReference>
<dbReference type="SUPFAM" id="SSF69118">
    <property type="entry name" value="AhpD-like"/>
    <property type="match status" value="1"/>
</dbReference>